<evidence type="ECO:0000255" key="1">
    <source>
        <dbReference type="PROSITE-ProRule" id="PRU00080"/>
    </source>
</evidence>
<accession>Q9FM87</accession>
<sequence>MDRISLLPDDVVFKILSFVPTKVVVSTNLLSKRWRYLWKHVPKLDYRDPSLVDTEHWRASRFVDKFLLLHEAPVLETLHLSLSRNCPPSDIETWISVAISRRVRNLHIYRYIPSTGPIRLPRSLYTCETLVSLYLLLDFTVDDAPFMFCFRSLKVLVLLFAKFSSDEIVNRLLSGCPVLEGLILIRRNDNVKNFTIAAPSLQRLIAIDCRSQVPGDDVGFVIKAPSLKSLTLLNFSPHSGFRSLVKMPDLVKASIKVRHGDSKMFMGCLTSTKRLALCLQPPLDSCPIGVFNQLVSLSLCTCSLGWCRLILNHTPKLRVLRFEQRQAKFYQLLDPLKRCCSSSVDVQTQWEQPSSVPKCLISSLETVEWIDYKGREVEKKVVMYLLENSRQLKTMAIRSLKSTNDNEKLKMLQELSSIHRICTKCGLSFT</sequence>
<proteinExistence type="predicted"/>
<reference key="1">
    <citation type="journal article" date="1998" name="DNA Res.">
        <title>Structural analysis of Arabidopsis thaliana chromosome 5. IV. Sequence features of the regions of 1,456,315 bp covered by nineteen physically assigned P1 and TAC clones.</title>
        <authorList>
            <person name="Sato S."/>
            <person name="Kaneko T."/>
            <person name="Kotani H."/>
            <person name="Nakamura Y."/>
            <person name="Asamizu E."/>
            <person name="Miyajima N."/>
            <person name="Tabata S."/>
        </authorList>
    </citation>
    <scope>NUCLEOTIDE SEQUENCE [LARGE SCALE GENOMIC DNA]</scope>
    <source>
        <strain>cv. Columbia</strain>
    </source>
</reference>
<reference key="2">
    <citation type="journal article" date="2017" name="Plant J.">
        <title>Araport11: a complete reannotation of the Arabidopsis thaliana reference genome.</title>
        <authorList>
            <person name="Cheng C.Y."/>
            <person name="Krishnakumar V."/>
            <person name="Chan A.P."/>
            <person name="Thibaud-Nissen F."/>
            <person name="Schobel S."/>
            <person name="Town C.D."/>
        </authorList>
    </citation>
    <scope>GENOME REANNOTATION</scope>
    <source>
        <strain>cv. Columbia</strain>
    </source>
</reference>
<name>FBD26_ARATH</name>
<gene>
    <name type="ordered locus">At5g56440</name>
    <name type="ORF">MCD7.20</name>
</gene>
<protein>
    <recommendedName>
        <fullName>Putative FBD-associated F-box protein At5g56440</fullName>
    </recommendedName>
</protein>
<dbReference type="EMBL" id="AB009049">
    <property type="protein sequence ID" value="BAB11272.1"/>
    <property type="molecule type" value="Genomic_DNA"/>
</dbReference>
<dbReference type="EMBL" id="CP002688">
    <property type="protein sequence ID" value="AED96765.1"/>
    <property type="molecule type" value="Genomic_DNA"/>
</dbReference>
<dbReference type="RefSeq" id="NP_200455.1">
    <property type="nucleotide sequence ID" value="NM_125027.1"/>
</dbReference>
<dbReference type="FunCoup" id="Q9FM87">
    <property type="interactions" value="343"/>
</dbReference>
<dbReference type="PaxDb" id="3702-AT5G56440.1"/>
<dbReference type="EnsemblPlants" id="AT5G56440.1">
    <property type="protein sequence ID" value="AT5G56440.1"/>
    <property type="gene ID" value="AT5G56440"/>
</dbReference>
<dbReference type="GeneID" id="835745"/>
<dbReference type="Gramene" id="AT5G56440.1">
    <property type="protein sequence ID" value="AT5G56440.1"/>
    <property type="gene ID" value="AT5G56440"/>
</dbReference>
<dbReference type="KEGG" id="ath:AT5G56440"/>
<dbReference type="Araport" id="AT5G56440"/>
<dbReference type="TAIR" id="AT5G56440"/>
<dbReference type="HOGENOM" id="CLU_010721_1_2_1"/>
<dbReference type="InParanoid" id="Q9FM87"/>
<dbReference type="OMA" id="DYKGTQT"/>
<dbReference type="PhylomeDB" id="Q9FM87"/>
<dbReference type="PRO" id="PR:Q9FM87"/>
<dbReference type="Proteomes" id="UP000006548">
    <property type="component" value="Chromosome 5"/>
</dbReference>
<dbReference type="ExpressionAtlas" id="Q9FM87">
    <property type="expression patterns" value="baseline and differential"/>
</dbReference>
<dbReference type="CDD" id="cd22160">
    <property type="entry name" value="F-box_AtFBL13-like"/>
    <property type="match status" value="1"/>
</dbReference>
<dbReference type="Gene3D" id="3.80.10.10">
    <property type="entry name" value="Ribonuclease Inhibitor"/>
    <property type="match status" value="1"/>
</dbReference>
<dbReference type="InterPro" id="IPR036047">
    <property type="entry name" value="F-box-like_dom_sf"/>
</dbReference>
<dbReference type="InterPro" id="IPR053781">
    <property type="entry name" value="F-box_AtFBL13-like"/>
</dbReference>
<dbReference type="InterPro" id="IPR001810">
    <property type="entry name" value="F-box_dom"/>
</dbReference>
<dbReference type="InterPro" id="IPR006566">
    <property type="entry name" value="FBD"/>
</dbReference>
<dbReference type="InterPro" id="IPR050232">
    <property type="entry name" value="FBL13/AtMIF1-like"/>
</dbReference>
<dbReference type="InterPro" id="IPR032675">
    <property type="entry name" value="LRR_dom_sf"/>
</dbReference>
<dbReference type="InterPro" id="IPR055411">
    <property type="entry name" value="LRR_FXL15/At3g58940/PEG3-like"/>
</dbReference>
<dbReference type="PANTHER" id="PTHR31900:SF34">
    <property type="entry name" value="EMB|CAB62440.1-RELATED"/>
    <property type="match status" value="1"/>
</dbReference>
<dbReference type="PANTHER" id="PTHR31900">
    <property type="entry name" value="F-BOX/RNI SUPERFAMILY PROTEIN-RELATED"/>
    <property type="match status" value="1"/>
</dbReference>
<dbReference type="Pfam" id="PF00646">
    <property type="entry name" value="F-box"/>
    <property type="match status" value="1"/>
</dbReference>
<dbReference type="Pfam" id="PF08387">
    <property type="entry name" value="FBD"/>
    <property type="match status" value="1"/>
</dbReference>
<dbReference type="Pfam" id="PF24758">
    <property type="entry name" value="LRR_At5g56370"/>
    <property type="match status" value="1"/>
</dbReference>
<dbReference type="SMART" id="SM00579">
    <property type="entry name" value="FBD"/>
    <property type="match status" value="1"/>
</dbReference>
<dbReference type="SMART" id="SM00256">
    <property type="entry name" value="FBOX"/>
    <property type="match status" value="1"/>
</dbReference>
<dbReference type="SUPFAM" id="SSF81383">
    <property type="entry name" value="F-box domain"/>
    <property type="match status" value="1"/>
</dbReference>
<dbReference type="SUPFAM" id="SSF52047">
    <property type="entry name" value="RNI-like"/>
    <property type="match status" value="1"/>
</dbReference>
<dbReference type="PROSITE" id="PS50181">
    <property type="entry name" value="FBOX"/>
    <property type="match status" value="1"/>
</dbReference>
<organism>
    <name type="scientific">Arabidopsis thaliana</name>
    <name type="common">Mouse-ear cress</name>
    <dbReference type="NCBI Taxonomy" id="3702"/>
    <lineage>
        <taxon>Eukaryota</taxon>
        <taxon>Viridiplantae</taxon>
        <taxon>Streptophyta</taxon>
        <taxon>Embryophyta</taxon>
        <taxon>Tracheophyta</taxon>
        <taxon>Spermatophyta</taxon>
        <taxon>Magnoliopsida</taxon>
        <taxon>eudicotyledons</taxon>
        <taxon>Gunneridae</taxon>
        <taxon>Pentapetalae</taxon>
        <taxon>rosids</taxon>
        <taxon>malvids</taxon>
        <taxon>Brassicales</taxon>
        <taxon>Brassicaceae</taxon>
        <taxon>Camelineae</taxon>
        <taxon>Arabidopsis</taxon>
    </lineage>
</organism>
<feature type="chain" id="PRO_0000283158" description="Putative FBD-associated F-box protein At5g56440">
    <location>
        <begin position="1"/>
        <end position="430"/>
    </location>
</feature>
<feature type="domain" description="F-box" evidence="1">
    <location>
        <begin position="1"/>
        <end position="49"/>
    </location>
</feature>
<feature type="domain" description="FBD">
    <location>
        <begin position="349"/>
        <end position="399"/>
    </location>
</feature>
<keyword id="KW-1185">Reference proteome</keyword>